<proteinExistence type="inferred from homology"/>
<name>CYB_OCETE</name>
<gene>
    <name type="primary">MT-CYB</name>
    <name type="synonym">COB</name>
    <name type="synonym">CYTB</name>
    <name type="synonym">MTCYB</name>
</gene>
<dbReference type="EMBL" id="AF076066">
    <property type="protein sequence ID" value="AAC68623.1"/>
    <property type="molecule type" value="Genomic_DNA"/>
</dbReference>
<dbReference type="SMR" id="O79212"/>
<dbReference type="GO" id="GO:0005743">
    <property type="term" value="C:mitochondrial inner membrane"/>
    <property type="evidence" value="ECO:0007669"/>
    <property type="project" value="UniProtKB-SubCell"/>
</dbReference>
<dbReference type="GO" id="GO:0045275">
    <property type="term" value="C:respiratory chain complex III"/>
    <property type="evidence" value="ECO:0007669"/>
    <property type="project" value="InterPro"/>
</dbReference>
<dbReference type="GO" id="GO:0046872">
    <property type="term" value="F:metal ion binding"/>
    <property type="evidence" value="ECO:0007669"/>
    <property type="project" value="UniProtKB-KW"/>
</dbReference>
<dbReference type="GO" id="GO:0008121">
    <property type="term" value="F:ubiquinol-cytochrome-c reductase activity"/>
    <property type="evidence" value="ECO:0007669"/>
    <property type="project" value="InterPro"/>
</dbReference>
<dbReference type="GO" id="GO:0006122">
    <property type="term" value="P:mitochondrial electron transport, ubiquinol to cytochrome c"/>
    <property type="evidence" value="ECO:0007669"/>
    <property type="project" value="TreeGrafter"/>
</dbReference>
<dbReference type="CDD" id="cd00290">
    <property type="entry name" value="cytochrome_b_C"/>
    <property type="match status" value="1"/>
</dbReference>
<dbReference type="CDD" id="cd00284">
    <property type="entry name" value="Cytochrome_b_N"/>
    <property type="match status" value="1"/>
</dbReference>
<dbReference type="FunFam" id="1.20.810.10:FF:000002">
    <property type="entry name" value="Cytochrome b"/>
    <property type="match status" value="1"/>
</dbReference>
<dbReference type="Gene3D" id="1.20.810.10">
    <property type="entry name" value="Cytochrome Bc1 Complex, Chain C"/>
    <property type="match status" value="1"/>
</dbReference>
<dbReference type="InterPro" id="IPR005798">
    <property type="entry name" value="Cyt_b/b6_C"/>
</dbReference>
<dbReference type="InterPro" id="IPR036150">
    <property type="entry name" value="Cyt_b/b6_C_sf"/>
</dbReference>
<dbReference type="InterPro" id="IPR005797">
    <property type="entry name" value="Cyt_b/b6_N"/>
</dbReference>
<dbReference type="InterPro" id="IPR027387">
    <property type="entry name" value="Cytb/b6-like_sf"/>
</dbReference>
<dbReference type="InterPro" id="IPR030689">
    <property type="entry name" value="Cytochrome_b"/>
</dbReference>
<dbReference type="InterPro" id="IPR048260">
    <property type="entry name" value="Cytochrome_b_C_euk/bac"/>
</dbReference>
<dbReference type="InterPro" id="IPR048259">
    <property type="entry name" value="Cytochrome_b_N_euk/bac"/>
</dbReference>
<dbReference type="InterPro" id="IPR016174">
    <property type="entry name" value="Di-haem_cyt_TM"/>
</dbReference>
<dbReference type="PANTHER" id="PTHR19271">
    <property type="entry name" value="CYTOCHROME B"/>
    <property type="match status" value="1"/>
</dbReference>
<dbReference type="PANTHER" id="PTHR19271:SF16">
    <property type="entry name" value="CYTOCHROME B"/>
    <property type="match status" value="1"/>
</dbReference>
<dbReference type="Pfam" id="PF00032">
    <property type="entry name" value="Cytochrom_B_C"/>
    <property type="match status" value="1"/>
</dbReference>
<dbReference type="Pfam" id="PF00033">
    <property type="entry name" value="Cytochrome_B"/>
    <property type="match status" value="1"/>
</dbReference>
<dbReference type="PIRSF" id="PIRSF038885">
    <property type="entry name" value="COB"/>
    <property type="match status" value="1"/>
</dbReference>
<dbReference type="SUPFAM" id="SSF81648">
    <property type="entry name" value="a domain/subunit of cytochrome bc1 complex (Ubiquinol-cytochrome c reductase)"/>
    <property type="match status" value="1"/>
</dbReference>
<dbReference type="SUPFAM" id="SSF81342">
    <property type="entry name" value="Transmembrane di-heme cytochromes"/>
    <property type="match status" value="1"/>
</dbReference>
<dbReference type="PROSITE" id="PS51003">
    <property type="entry name" value="CYTB_CTER"/>
    <property type="match status" value="1"/>
</dbReference>
<dbReference type="PROSITE" id="PS51002">
    <property type="entry name" value="CYTB_NTER"/>
    <property type="match status" value="1"/>
</dbReference>
<organism>
    <name type="scientific">Oceanodroma tethys</name>
    <name type="common">Wedge-rumped storm-petrel</name>
    <name type="synonym">Hydrobates tethys</name>
    <dbReference type="NCBI Taxonomy" id="79633"/>
    <lineage>
        <taxon>Eukaryota</taxon>
        <taxon>Metazoa</taxon>
        <taxon>Chordata</taxon>
        <taxon>Craniata</taxon>
        <taxon>Vertebrata</taxon>
        <taxon>Euteleostomi</taxon>
        <taxon>Archelosauria</taxon>
        <taxon>Archosauria</taxon>
        <taxon>Dinosauria</taxon>
        <taxon>Saurischia</taxon>
        <taxon>Theropoda</taxon>
        <taxon>Coelurosauria</taxon>
        <taxon>Aves</taxon>
        <taxon>Neognathae</taxon>
        <taxon>Neoaves</taxon>
        <taxon>Aequornithes</taxon>
        <taxon>Procellariiformes</taxon>
        <taxon>Hydrobatidae</taxon>
        <taxon>Oceanodroma</taxon>
    </lineage>
</organism>
<feature type="chain" id="PRO_0000061294" description="Cytochrome b">
    <location>
        <begin position="1"/>
        <end position="380"/>
    </location>
</feature>
<feature type="transmembrane region" description="Helical" evidence="2">
    <location>
        <begin position="34"/>
        <end position="54"/>
    </location>
</feature>
<feature type="transmembrane region" description="Helical" evidence="2">
    <location>
        <begin position="78"/>
        <end position="99"/>
    </location>
</feature>
<feature type="transmembrane region" description="Helical" evidence="2">
    <location>
        <begin position="114"/>
        <end position="134"/>
    </location>
</feature>
<feature type="transmembrane region" description="Helical" evidence="2">
    <location>
        <begin position="179"/>
        <end position="199"/>
    </location>
</feature>
<feature type="transmembrane region" description="Helical" evidence="2">
    <location>
        <begin position="227"/>
        <end position="247"/>
    </location>
</feature>
<feature type="transmembrane region" description="Helical" evidence="2">
    <location>
        <begin position="289"/>
        <end position="309"/>
    </location>
</feature>
<feature type="transmembrane region" description="Helical" evidence="2">
    <location>
        <begin position="321"/>
        <end position="341"/>
    </location>
</feature>
<feature type="transmembrane region" description="Helical" evidence="2">
    <location>
        <begin position="348"/>
        <end position="368"/>
    </location>
</feature>
<feature type="binding site" description="axial binding residue" evidence="2">
    <location>
        <position position="84"/>
    </location>
    <ligand>
        <name>heme b</name>
        <dbReference type="ChEBI" id="CHEBI:60344"/>
        <label>b562</label>
    </ligand>
    <ligandPart>
        <name>Fe</name>
        <dbReference type="ChEBI" id="CHEBI:18248"/>
    </ligandPart>
</feature>
<feature type="binding site" description="axial binding residue" evidence="2">
    <location>
        <position position="98"/>
    </location>
    <ligand>
        <name>heme b</name>
        <dbReference type="ChEBI" id="CHEBI:60344"/>
        <label>b566</label>
    </ligand>
    <ligandPart>
        <name>Fe</name>
        <dbReference type="ChEBI" id="CHEBI:18248"/>
    </ligandPart>
</feature>
<feature type="binding site" description="axial binding residue" evidence="2">
    <location>
        <position position="183"/>
    </location>
    <ligand>
        <name>heme b</name>
        <dbReference type="ChEBI" id="CHEBI:60344"/>
        <label>b562</label>
    </ligand>
    <ligandPart>
        <name>Fe</name>
        <dbReference type="ChEBI" id="CHEBI:18248"/>
    </ligandPart>
</feature>
<feature type="binding site" description="axial binding residue" evidence="2">
    <location>
        <position position="197"/>
    </location>
    <ligand>
        <name>heme b</name>
        <dbReference type="ChEBI" id="CHEBI:60344"/>
        <label>b566</label>
    </ligand>
    <ligandPart>
        <name>Fe</name>
        <dbReference type="ChEBI" id="CHEBI:18248"/>
    </ligandPart>
</feature>
<feature type="binding site" evidence="2">
    <location>
        <position position="202"/>
    </location>
    <ligand>
        <name>a ubiquinone</name>
        <dbReference type="ChEBI" id="CHEBI:16389"/>
    </ligand>
</feature>
<keyword id="KW-0249">Electron transport</keyword>
<keyword id="KW-0349">Heme</keyword>
<keyword id="KW-0408">Iron</keyword>
<keyword id="KW-0472">Membrane</keyword>
<keyword id="KW-0479">Metal-binding</keyword>
<keyword id="KW-0496">Mitochondrion</keyword>
<keyword id="KW-0999">Mitochondrion inner membrane</keyword>
<keyword id="KW-0679">Respiratory chain</keyword>
<keyword id="KW-0812">Transmembrane</keyword>
<keyword id="KW-1133">Transmembrane helix</keyword>
<keyword id="KW-0813">Transport</keyword>
<keyword id="KW-0830">Ubiquinone</keyword>
<sequence length="380" mass="42479">MAPNPRKSHPLLKMINNSLIDLPAPSNISAWWNFGSLLALCLMTQILTGLLLAMHYTADTTLAFSSVAHTCRDVQYGWLIRNMHANGASFFFICIYLHIGRGFYYGSYLHKETWNTGVLLLLTLMATAFVGYVLPWGQMSFWGATVITNMFSAIPYIGQTIVEWAWGGFSVDNPTLTRFFALHFLLPFMIAGLTLIHLTFLHESGSNNPLGIVSNCDKIPFHPYYSLKDALGLALLLLPLTTMALFSPNLLGDPENFTPANPLVTPPHIKPEWYFLFAYAILRSIPNKLGGVLALAASVLVLFLSPLLHKSKQRTMAFRPLSQLLFWTLVANLLILTWIGSQPVEHPFIIIGQLASTTYFIILLILFPITSALENKMLNF</sequence>
<comment type="function">
    <text evidence="2">Component of the ubiquinol-cytochrome c reductase complex (complex III or cytochrome b-c1 complex) that is part of the mitochondrial respiratory chain. The b-c1 complex mediates electron transfer from ubiquinol to cytochrome c. Contributes to the generation of a proton gradient across the mitochondrial membrane that is then used for ATP synthesis.</text>
</comment>
<comment type="cofactor">
    <cofactor evidence="2">
        <name>heme b</name>
        <dbReference type="ChEBI" id="CHEBI:60344"/>
    </cofactor>
    <text evidence="2">Binds 2 heme b groups non-covalently.</text>
</comment>
<comment type="subunit">
    <text evidence="2">The cytochrome bc1 complex contains 11 subunits: 3 respiratory subunits (MT-CYB, CYC1 and UQCRFS1), 2 core proteins (UQCRC1 and UQCRC2) and 6 low-molecular weight proteins (UQCRH/QCR6, UQCRB/QCR7, UQCRQ/QCR8, UQCR10/QCR9, UQCR11/QCR10 and a cleavage product of UQCRFS1). This cytochrome bc1 complex then forms a dimer.</text>
</comment>
<comment type="subcellular location">
    <subcellularLocation>
        <location evidence="2">Mitochondrion inner membrane</location>
        <topology evidence="2">Multi-pass membrane protein</topology>
    </subcellularLocation>
</comment>
<comment type="miscellaneous">
    <text evidence="1">Heme 1 (or BL or b562) is low-potential and absorbs at about 562 nm, and heme 2 (or BH or b566) is high-potential and absorbs at about 566 nm.</text>
</comment>
<comment type="similarity">
    <text evidence="3 4">Belongs to the cytochrome b family.</text>
</comment>
<comment type="caution">
    <text evidence="2">The full-length protein contains only eight transmembrane helices, not nine as predicted by bioinformatics tools.</text>
</comment>
<accession>O79212</accession>
<reference key="1">
    <citation type="journal article" date="1998" name="Mol. Biol. Evol.">
        <title>Body size effects and rates of cytochrome-b evolution in tube-nosed seabirds.</title>
        <authorList>
            <person name="Nunn G.B."/>
            <person name="Stanley S.E."/>
        </authorList>
    </citation>
    <scope>NUCLEOTIDE SEQUENCE [GENOMIC DNA]</scope>
    <source>
        <strain>Isolate Otethys-1</strain>
    </source>
</reference>
<evidence type="ECO:0000250" key="1"/>
<evidence type="ECO:0000250" key="2">
    <source>
        <dbReference type="UniProtKB" id="P00157"/>
    </source>
</evidence>
<evidence type="ECO:0000255" key="3">
    <source>
        <dbReference type="PROSITE-ProRule" id="PRU00967"/>
    </source>
</evidence>
<evidence type="ECO:0000255" key="4">
    <source>
        <dbReference type="PROSITE-ProRule" id="PRU00968"/>
    </source>
</evidence>
<protein>
    <recommendedName>
        <fullName>Cytochrome b</fullName>
    </recommendedName>
    <alternativeName>
        <fullName>Complex III subunit 3</fullName>
    </alternativeName>
    <alternativeName>
        <fullName>Complex III subunit III</fullName>
    </alternativeName>
    <alternativeName>
        <fullName>Cytochrome b-c1 complex subunit 3</fullName>
    </alternativeName>
    <alternativeName>
        <fullName>Ubiquinol-cytochrome-c reductase complex cytochrome b subunit</fullName>
    </alternativeName>
</protein>
<geneLocation type="mitochondrion"/>